<organism>
    <name type="scientific">Haemophilus ducreyi (strain 35000HP / ATCC 700724)</name>
    <dbReference type="NCBI Taxonomy" id="233412"/>
    <lineage>
        <taxon>Bacteria</taxon>
        <taxon>Pseudomonadati</taxon>
        <taxon>Pseudomonadota</taxon>
        <taxon>Gammaproteobacteria</taxon>
        <taxon>Pasteurellales</taxon>
        <taxon>Pasteurellaceae</taxon>
        <taxon>Haemophilus</taxon>
    </lineage>
</organism>
<dbReference type="EMBL" id="AE017143">
    <property type="protein sequence ID" value="AAP96172.1"/>
    <property type="molecule type" value="Genomic_DNA"/>
</dbReference>
<dbReference type="RefSeq" id="WP_010945221.1">
    <property type="nucleotide sequence ID" value="NC_002940.2"/>
</dbReference>
<dbReference type="SMR" id="Q7VLR3"/>
<dbReference type="STRING" id="233412.HD_1359"/>
<dbReference type="DNASU" id="1491251"/>
<dbReference type="KEGG" id="hdu:HD_1359"/>
<dbReference type="eggNOG" id="COG3787">
    <property type="taxonomic scope" value="Bacteria"/>
</dbReference>
<dbReference type="HOGENOM" id="CLU_105087_3_0_6"/>
<dbReference type="OrthoDB" id="8447155at2"/>
<dbReference type="Proteomes" id="UP000001022">
    <property type="component" value="Chromosome"/>
</dbReference>
<dbReference type="Gene3D" id="2.30.110.10">
    <property type="entry name" value="Electron Transport, Fmn-binding Protein, Chain A"/>
    <property type="match status" value="1"/>
</dbReference>
<dbReference type="HAMAP" id="MF_00764">
    <property type="entry name" value="UPF0306"/>
    <property type="match status" value="1"/>
</dbReference>
<dbReference type="InterPro" id="IPR012349">
    <property type="entry name" value="Split_barrel_FMN-bd"/>
</dbReference>
<dbReference type="InterPro" id="IPR011194">
    <property type="entry name" value="UPF0306"/>
</dbReference>
<dbReference type="PIRSF" id="PIRSF009554">
    <property type="entry name" value="UCP009554"/>
    <property type="match status" value="1"/>
</dbReference>
<dbReference type="SUPFAM" id="SSF50475">
    <property type="entry name" value="FMN-binding split barrel"/>
    <property type="match status" value="1"/>
</dbReference>
<sequence>MQKIPSFISRFIQDNHVVNFAAYTIDDFWTASCFYAFDHNMARLILLTSKNTRHSQIMLHNPKIVGTISAQITDIQAIKGIQFSATSQLLTKQDTEYHSSLTHYYQRHPFARLTSSDVWLLHLDMIKYTSNEYLFAQKSIWQRHTE</sequence>
<proteinExistence type="inferred from homology"/>
<evidence type="ECO:0000255" key="1">
    <source>
        <dbReference type="HAMAP-Rule" id="MF_00764"/>
    </source>
</evidence>
<comment type="similarity">
    <text evidence="1">Belongs to the UPF0306 family.</text>
</comment>
<name>Y1359_HAEDU</name>
<keyword id="KW-1185">Reference proteome</keyword>
<feature type="chain" id="PRO_0000214869" description="UPF0306 protein HD_1359">
    <location>
        <begin position="1"/>
        <end position="146"/>
    </location>
</feature>
<accession>Q7VLR3</accession>
<reference key="1">
    <citation type="submission" date="2003-06" db="EMBL/GenBank/DDBJ databases">
        <title>The complete genome sequence of Haemophilus ducreyi.</title>
        <authorList>
            <person name="Munson R.S. Jr."/>
            <person name="Ray W.C."/>
            <person name="Mahairas G."/>
            <person name="Sabo P."/>
            <person name="Mungur R."/>
            <person name="Johnson L."/>
            <person name="Nguyen D."/>
            <person name="Wang J."/>
            <person name="Forst C."/>
            <person name="Hood L."/>
        </authorList>
    </citation>
    <scope>NUCLEOTIDE SEQUENCE [LARGE SCALE GENOMIC DNA]</scope>
    <source>
        <strain>35000HP / ATCC 700724</strain>
    </source>
</reference>
<protein>
    <recommendedName>
        <fullName evidence="1">UPF0306 protein HD_1359</fullName>
    </recommendedName>
</protein>
<gene>
    <name type="ordered locus">HD_1359</name>
</gene>